<feature type="chain" id="PRO_1000148236" description="7,8-didemethyl-8-hydroxy-5-deazariboflavin synthase">
    <location>
        <begin position="1"/>
        <end position="352"/>
    </location>
</feature>
<feature type="domain" description="Radical SAM core" evidence="2">
    <location>
        <begin position="35"/>
        <end position="275"/>
    </location>
</feature>
<feature type="binding site" evidence="1">
    <location>
        <position position="49"/>
    </location>
    <ligand>
        <name>[4Fe-4S] cluster</name>
        <dbReference type="ChEBI" id="CHEBI:49883"/>
        <note>4Fe-4S-S-AdoMet</note>
    </ligand>
</feature>
<feature type="binding site" evidence="1">
    <location>
        <position position="53"/>
    </location>
    <ligand>
        <name>[4Fe-4S] cluster</name>
        <dbReference type="ChEBI" id="CHEBI:49883"/>
        <note>4Fe-4S-S-AdoMet</note>
    </ligand>
</feature>
<feature type="binding site" evidence="1">
    <location>
        <position position="56"/>
    </location>
    <ligand>
        <name>[4Fe-4S] cluster</name>
        <dbReference type="ChEBI" id="CHEBI:49883"/>
        <note>4Fe-4S-S-AdoMet</note>
    </ligand>
</feature>
<proteinExistence type="inferred from homology"/>
<evidence type="ECO:0000255" key="1">
    <source>
        <dbReference type="HAMAP-Rule" id="MF_01611"/>
    </source>
</evidence>
<evidence type="ECO:0000255" key="2">
    <source>
        <dbReference type="PROSITE-ProRule" id="PRU01266"/>
    </source>
</evidence>
<keyword id="KW-0004">4Fe-4S</keyword>
<keyword id="KW-0408">Iron</keyword>
<keyword id="KW-0411">Iron-sulfur</keyword>
<keyword id="KW-0456">Lyase</keyword>
<keyword id="KW-0479">Metal-binding</keyword>
<keyword id="KW-0949">S-adenosyl-L-methionine</keyword>
<gene>
    <name evidence="1" type="primary">cofG</name>
    <name type="ordered locus">MmarC6_1779</name>
</gene>
<sequence>MITKSEALDFLKFNSINPILEKLEDINTRNSSKTITFSKNAFIPVCNWCRNVCGYCTFRAEDFKLLKMEEMKEILIKADVFGCREALFTFGENVDENEKVKEELKKMGYSGILEYLYEISAWCLENTNLLPHTNCGILSYDELKYLREVNASMGLMLENSSERLCSTIAHEKSPGKDPNLRIEMIENAGKLKIPFTTGILIGIGETLEERIDSIFEIKRIHEKYGNIQEVIVQNFRSKPKIPMENYKEPSPVEMFKMIILSKLILEDISIQVPPNLNRETGQLFLMAGIDDWGGVSPLTKDFVNPEAPWPDIEELNSFSKELGFNLKERLPVYEKYIAEEWLDKKILEKIKK</sequence>
<protein>
    <recommendedName>
        <fullName evidence="1">7,8-didemethyl-8-hydroxy-5-deazariboflavin synthase</fullName>
        <ecNumber evidence="1">4.3.1.32</ecNumber>
    </recommendedName>
    <alternativeName>
        <fullName evidence="1">FO synthase subunit 1</fullName>
    </alternativeName>
</protein>
<reference key="1">
    <citation type="submission" date="2007-10" db="EMBL/GenBank/DDBJ databases">
        <title>Complete sequence of Methanococcus maripaludis C6.</title>
        <authorList>
            <consortium name="US DOE Joint Genome Institute"/>
            <person name="Copeland A."/>
            <person name="Lucas S."/>
            <person name="Lapidus A."/>
            <person name="Barry K."/>
            <person name="Glavina del Rio T."/>
            <person name="Dalin E."/>
            <person name="Tice H."/>
            <person name="Pitluck S."/>
            <person name="Clum A."/>
            <person name="Schmutz J."/>
            <person name="Larimer F."/>
            <person name="Land M."/>
            <person name="Hauser L."/>
            <person name="Kyrpides N."/>
            <person name="Mikhailova N."/>
            <person name="Sieprawska-Lupa M."/>
            <person name="Whitman W.B."/>
            <person name="Richardson P."/>
        </authorList>
    </citation>
    <scope>NUCLEOTIDE SEQUENCE [LARGE SCALE GENOMIC DNA]</scope>
    <source>
        <strain>C6 / ATCC BAA-1332</strain>
    </source>
</reference>
<organism>
    <name type="scientific">Methanococcus maripaludis (strain C6 / ATCC BAA-1332)</name>
    <dbReference type="NCBI Taxonomy" id="444158"/>
    <lineage>
        <taxon>Archaea</taxon>
        <taxon>Methanobacteriati</taxon>
        <taxon>Methanobacteriota</taxon>
        <taxon>Methanomada group</taxon>
        <taxon>Methanococci</taxon>
        <taxon>Methanococcales</taxon>
        <taxon>Methanococcaceae</taxon>
        <taxon>Methanococcus</taxon>
    </lineage>
</organism>
<dbReference type="EC" id="4.3.1.32" evidence="1"/>
<dbReference type="EMBL" id="CP000867">
    <property type="protein sequence ID" value="ABX02590.1"/>
    <property type="molecule type" value="Genomic_DNA"/>
</dbReference>
<dbReference type="SMR" id="A9AB67"/>
<dbReference type="STRING" id="444158.MmarC6_1779"/>
<dbReference type="KEGG" id="mmx:MmarC6_1779"/>
<dbReference type="eggNOG" id="arCOG00657">
    <property type="taxonomic scope" value="Archaea"/>
</dbReference>
<dbReference type="HOGENOM" id="CLU_054174_0_0_2"/>
<dbReference type="OrthoDB" id="35347at2157"/>
<dbReference type="PhylomeDB" id="A9AB67"/>
<dbReference type="UniPathway" id="UPA00072"/>
<dbReference type="GO" id="GO:0051539">
    <property type="term" value="F:4 iron, 4 sulfur cluster binding"/>
    <property type="evidence" value="ECO:0007669"/>
    <property type="project" value="UniProtKB-KW"/>
</dbReference>
<dbReference type="GO" id="GO:0044689">
    <property type="term" value="F:7,8-didemethyl-8-hydroxy-5-deazariboflavin synthase activity"/>
    <property type="evidence" value="ECO:0007669"/>
    <property type="project" value="UniProtKB-EC"/>
</dbReference>
<dbReference type="GO" id="GO:0005506">
    <property type="term" value="F:iron ion binding"/>
    <property type="evidence" value="ECO:0007669"/>
    <property type="project" value="UniProtKB-UniRule"/>
</dbReference>
<dbReference type="GO" id="GO:0016765">
    <property type="term" value="F:transferase activity, transferring alkyl or aryl (other than methyl) groups"/>
    <property type="evidence" value="ECO:0007669"/>
    <property type="project" value="InterPro"/>
</dbReference>
<dbReference type="CDD" id="cd01335">
    <property type="entry name" value="Radical_SAM"/>
    <property type="match status" value="1"/>
</dbReference>
<dbReference type="Gene3D" id="3.20.20.70">
    <property type="entry name" value="Aldolase class I"/>
    <property type="match status" value="1"/>
</dbReference>
<dbReference type="HAMAP" id="MF_01611">
    <property type="entry name" value="FO_synth_sub1"/>
    <property type="match status" value="1"/>
</dbReference>
<dbReference type="InterPro" id="IPR013785">
    <property type="entry name" value="Aldolase_TIM"/>
</dbReference>
<dbReference type="InterPro" id="IPR019939">
    <property type="entry name" value="CofG_family"/>
</dbReference>
<dbReference type="InterPro" id="IPR006638">
    <property type="entry name" value="Elp3/MiaA/NifB-like_rSAM"/>
</dbReference>
<dbReference type="InterPro" id="IPR034405">
    <property type="entry name" value="F420"/>
</dbReference>
<dbReference type="InterPro" id="IPR007197">
    <property type="entry name" value="rSAM"/>
</dbReference>
<dbReference type="NCBIfam" id="TIGR03550">
    <property type="entry name" value="F420_cofG"/>
    <property type="match status" value="1"/>
</dbReference>
<dbReference type="NCBIfam" id="NF004884">
    <property type="entry name" value="PRK06245.1"/>
    <property type="match status" value="1"/>
</dbReference>
<dbReference type="PANTHER" id="PTHR43076:SF15">
    <property type="entry name" value="7,8-DIDEMETHYL-8-HYDROXY-5-DEAZARIBOFLAVIN SYNTHASE"/>
    <property type="match status" value="1"/>
</dbReference>
<dbReference type="PANTHER" id="PTHR43076">
    <property type="entry name" value="FO SYNTHASE (COFH)"/>
    <property type="match status" value="1"/>
</dbReference>
<dbReference type="Pfam" id="PF04055">
    <property type="entry name" value="Radical_SAM"/>
    <property type="match status" value="1"/>
</dbReference>
<dbReference type="SFLD" id="SFLDF00294">
    <property type="entry name" value="7_8-didemethyl-8-hydroxy-5-dea"/>
    <property type="match status" value="1"/>
</dbReference>
<dbReference type="SFLD" id="SFLDS00029">
    <property type="entry name" value="Radical_SAM"/>
    <property type="match status" value="1"/>
</dbReference>
<dbReference type="SMART" id="SM00729">
    <property type="entry name" value="Elp3"/>
    <property type="match status" value="1"/>
</dbReference>
<dbReference type="SUPFAM" id="SSF102114">
    <property type="entry name" value="Radical SAM enzymes"/>
    <property type="match status" value="1"/>
</dbReference>
<dbReference type="PROSITE" id="PS51918">
    <property type="entry name" value="RADICAL_SAM"/>
    <property type="match status" value="1"/>
</dbReference>
<accession>A9AB67</accession>
<name>COFG_METM6</name>
<comment type="function">
    <text evidence="1">Catalyzes the radical-mediated synthesis of 7,8-didemethyl-8-hydroxy-5-deazariboflavin from 5-amino-5-(4-hydroxybenzyl)-6-(D-ribitylimino)-5,6-dihydrouracil.</text>
</comment>
<comment type="catalytic activity">
    <reaction evidence="1">
        <text>5-amino-5-(4-hydroxybenzyl)-6-(D-ribitylimino)-5,6-dihydrouracil + S-adenosyl-L-methionine = 7,8-didemethyl-8-hydroxy-5-deazariboflavin + 5'-deoxyadenosine + L-methionine + NH4(+) + H(+)</text>
        <dbReference type="Rhea" id="RHEA:55204"/>
        <dbReference type="ChEBI" id="CHEBI:15378"/>
        <dbReference type="ChEBI" id="CHEBI:17319"/>
        <dbReference type="ChEBI" id="CHEBI:28938"/>
        <dbReference type="ChEBI" id="CHEBI:57844"/>
        <dbReference type="ChEBI" id="CHEBI:59789"/>
        <dbReference type="ChEBI" id="CHEBI:59904"/>
        <dbReference type="ChEBI" id="CHEBI:85936"/>
        <dbReference type="EC" id="4.3.1.32"/>
    </reaction>
</comment>
<comment type="cofactor">
    <cofactor evidence="1">
        <name>[4Fe-4S] cluster</name>
        <dbReference type="ChEBI" id="CHEBI:49883"/>
    </cofactor>
    <text evidence="1">Binds 1 [4Fe-4S] cluster. The cluster is coordinated with 3 cysteines and an exchangeable S-adenosyl-L-methionine.</text>
</comment>
<comment type="pathway">
    <text evidence="1">Cofactor biosynthesis; coenzyme F0 biosynthesis.</text>
</comment>
<comment type="subunit">
    <text evidence="1">Consists of two subunits, CofG and CofH.</text>
</comment>
<comment type="similarity">
    <text evidence="1">Belongs to the radical SAM superfamily. CofG family.</text>
</comment>